<comment type="function">
    <text>Chemotactic for interleukin-activated T-cells but not unstimulated T-cells, neutrophils or monocytes. Induces calcium release in activated T-cells. Binds to CXCR3. May play an important role in CNS diseases which involve T-cell recruitment. May play a role in skin immune responses.</text>
</comment>
<comment type="subunit">
    <text evidence="4">Interacts with TNFAIP6 (via Link domain).</text>
</comment>
<comment type="interaction">
    <interactant intactId="EBI-2871971">
        <id>O14625</id>
    </interactant>
    <interactant intactId="EBI-725342">
        <id>Q99616</id>
        <label>CCL13</label>
    </interactant>
    <organismsDiffer>false</organismsDiffer>
    <experiments>2</experiments>
</comment>
<comment type="interaction">
    <interactant intactId="EBI-2871971">
        <id>O14625</id>
    </interactant>
    <interactant intactId="EBI-16803966">
        <id>O00175</id>
        <label>CCL24</label>
    </interactant>
    <organismsDiffer>false</organismsDiffer>
    <experiments>2</experiments>
</comment>
<comment type="interaction">
    <interactant intactId="EBI-2871971">
        <id>O14625</id>
    </interactant>
    <interactant intactId="EBI-7783416">
        <id>Q9Y258</id>
        <label>CCL26</label>
    </interactant>
    <organismsDiffer>false</organismsDiffer>
    <experiments>2</experiments>
</comment>
<comment type="interaction">
    <interactant intactId="EBI-2871971">
        <id>O14625</id>
    </interactant>
    <interactant intactId="EBI-2848366">
        <id>P13501</id>
        <label>CCL5</label>
    </interactant>
    <organismsDiffer>false</organismsDiffer>
    <experiments>2</experiments>
</comment>
<comment type="interaction">
    <interactant intactId="EBI-2871971">
        <id>O14625</id>
    </interactant>
    <interactant intactId="EBI-3913254">
        <id>P48061</id>
        <label>CXCL12</label>
    </interactant>
    <organismsDiffer>false</organismsDiffer>
    <experiments>3</experiments>
</comment>
<comment type="interaction">
    <interactant intactId="EBI-2871971">
        <id>O14625</id>
    </interactant>
    <interactant intactId="EBI-2798068">
        <id>O95715</id>
        <label>CXCL14</label>
    </interactant>
    <organismsDiffer>false</organismsDiffer>
    <experiments>2</experiments>
</comment>
<comment type="interaction">
    <interactant intactId="EBI-2871971">
        <id>O14625</id>
    </interactant>
    <interactant intactId="EBI-2871277">
        <id>P27487</id>
        <label>DPP4</label>
    </interactant>
    <organismsDiffer>false</organismsDiffer>
    <experiments>2</experiments>
</comment>
<comment type="interaction">
    <interactant intactId="EBI-2871971">
        <id>O14625</id>
    </interactant>
    <interactant intactId="EBI-742948">
        <id>Q5JR59</id>
        <label>MTUS2</label>
    </interactant>
    <organismsDiffer>false</organismsDiffer>
    <experiments>3</experiments>
</comment>
<comment type="interaction">
    <interactant intactId="EBI-2871971">
        <id>O14625</id>
    </interactant>
    <interactant intactId="EBI-2565740">
        <id>P02776</id>
        <label>PF4</label>
    </interactant>
    <organismsDiffer>false</organismsDiffer>
    <experiments>2</experiments>
</comment>
<comment type="interaction">
    <interactant intactId="EBI-2871971">
        <id>O14625</id>
    </interactant>
    <interactant intactId="EBI-1223944">
        <id>P10720</id>
        <label>PF4V1</label>
    </interactant>
    <organismsDiffer>false</organismsDiffer>
    <experiments>2</experiments>
</comment>
<comment type="interaction">
    <interactant intactId="EBI-11711364">
        <id>PRO_0000005106</id>
    </interactant>
    <interactant intactId="EBI-11700693">
        <id>P98066</id>
        <label>TNFAIP6</label>
    </interactant>
    <organismsDiffer>false</organismsDiffer>
    <experiments>2</experiments>
</comment>
<comment type="subcellular location">
    <subcellularLocation>
        <location>Secreted</location>
    </subcellularLocation>
</comment>
<comment type="tissue specificity">
    <text>High levels in peripheral blood leukocytes, pancreas and liver astrocytes. Moderate levels in thymus, spleen and lung. Low levels in placenta, prostate and small intestine. Also found in epidermal basal layer keratinocytes in skin disorders.</text>
</comment>
<comment type="induction">
    <text>By IFNG/IFN-gamma and IFNB1/IFN-beta. Induction by IFNG/IFN-gamma is enhanced by TNF in monocytes, dermal fibroblasts and endothelial cells, and by IL1/interleukin-1 in astrocytes.</text>
</comment>
<comment type="mass spectrometry"/>
<comment type="similarity">
    <text evidence="5">Belongs to the intercrine alpha (chemokine CxC) family.</text>
</comment>
<comment type="sequence caution" evidence="5">
    <conflict type="erroneous initiation">
        <sequence resource="EMBL-CDS" id="AAB17374"/>
    </conflict>
</comment>
<comment type="online information" name="Wikipedia">
    <link uri="https://en.wikipedia.org/wiki/CXCL11"/>
    <text>CXCL11 entry</text>
</comment>
<feature type="signal peptide" evidence="1">
    <location>
        <begin position="1"/>
        <end position="21"/>
    </location>
</feature>
<feature type="chain" id="PRO_0000005106" description="C-X-C motif chemokine 11">
    <location>
        <begin position="22"/>
        <end position="94"/>
    </location>
</feature>
<feature type="modified residue" description="Citrulline; by PAD2" evidence="3">
    <location>
        <position position="27"/>
    </location>
</feature>
<feature type="disulfide bond" evidence="2">
    <location>
        <begin position="30"/>
        <end position="57"/>
    </location>
</feature>
<feature type="disulfide bond" evidence="2">
    <location>
        <begin position="32"/>
        <end position="74"/>
    </location>
</feature>
<feature type="sequence variant" id="VAR_048700" description="In dbSNP:rs4859596.">
    <original>N</original>
    <variation>S</variation>
    <location>
        <position position="55"/>
    </location>
</feature>
<feature type="sequence conflict" description="In Ref. 1; AAB17374." evidence="5" ref="1">
    <original>NKGQ</original>
    <variation>IRK</variation>
    <location>
        <begin position="69"/>
        <end position="72"/>
    </location>
</feature>
<feature type="sequence conflict" description="In Ref. 1; AAB17374." evidence="5" ref="1">
    <original>K</original>
    <variation>NRA</variation>
    <location>
        <position position="78"/>
    </location>
</feature>
<feature type="sequence conflict" description="In Ref. 1; AAB17374." evidence="5" ref="1">
    <original>V</original>
    <variation>A</variation>
    <location>
        <position position="89"/>
    </location>
</feature>
<feature type="strand" evidence="6">
    <location>
        <begin position="48"/>
        <end position="51"/>
    </location>
</feature>
<feature type="strand" evidence="6">
    <location>
        <begin position="55"/>
        <end position="57"/>
    </location>
</feature>
<feature type="strand" evidence="6">
    <location>
        <begin position="61"/>
        <end position="65"/>
    </location>
</feature>
<feature type="helix" evidence="6">
    <location>
        <begin position="67"/>
        <end position="69"/>
    </location>
</feature>
<feature type="strand" evidence="6">
    <location>
        <begin position="72"/>
        <end position="75"/>
    </location>
</feature>
<feature type="helix" evidence="6">
    <location>
        <begin position="80"/>
        <end position="92"/>
    </location>
</feature>
<organism>
    <name type="scientific">Homo sapiens</name>
    <name type="common">Human</name>
    <dbReference type="NCBI Taxonomy" id="9606"/>
    <lineage>
        <taxon>Eukaryota</taxon>
        <taxon>Metazoa</taxon>
        <taxon>Chordata</taxon>
        <taxon>Craniata</taxon>
        <taxon>Vertebrata</taxon>
        <taxon>Euteleostomi</taxon>
        <taxon>Mammalia</taxon>
        <taxon>Eutheria</taxon>
        <taxon>Euarchontoglires</taxon>
        <taxon>Primates</taxon>
        <taxon>Haplorrhini</taxon>
        <taxon>Catarrhini</taxon>
        <taxon>Hominidae</taxon>
        <taxon>Homo</taxon>
    </lineage>
</organism>
<reference key="1">
    <citation type="journal article" date="1996" name="J. Biol. Chem.">
        <title>Characterization of beta-R1, a gene that is selectively induced by interferon beta (IFN-beta) compared with IFN-alpha.</title>
        <authorList>
            <person name="Rani M.R.S."/>
            <person name="Foster G.R."/>
            <person name="Leung S."/>
            <person name="Leaman D."/>
            <person name="Stark G.R."/>
            <person name="Ransohoff R.M."/>
        </authorList>
    </citation>
    <scope>NUCLEOTIDE SEQUENCE [MRNA]</scope>
    <source>
        <tissue>Astrocyte</tissue>
    </source>
</reference>
<reference key="2">
    <citation type="journal article" date="1997" name="Gene">
        <title>A genetic selection for isolating cDNAs encoding secreted proteins.</title>
        <authorList>
            <person name="Jacobs K.A."/>
            <person name="Collins-Racie L.A."/>
            <person name="Colbert M."/>
            <person name="Duckett M."/>
            <person name="Golden-Fleet M."/>
            <person name="Kelleher K."/>
            <person name="Kriz R."/>
            <person name="LaVallie E.R."/>
            <person name="Merberg D."/>
            <person name="Spaulding V."/>
            <person name="Stover J."/>
            <person name="Williamson M.J."/>
            <person name="McCoy J.M."/>
        </authorList>
    </citation>
    <scope>NUCLEOTIDE SEQUENCE [MRNA]</scope>
    <source>
        <tissue>Peripheral blood monocyte</tissue>
    </source>
</reference>
<reference key="3">
    <citation type="journal article" date="1998" name="J. Exp. Med.">
        <title>Interferon-inducible T cell alpha chemoattractant (I-TAC): a novel non-ELR CXC chemokine with potent activity on activated T cells through selective high affinity binding to CXCR3.</title>
        <authorList>
            <person name="Cole K.E."/>
            <person name="Strick C.A."/>
            <person name="Paradis T.J."/>
            <person name="Ogborne K.T."/>
            <person name="Loetscher M."/>
            <person name="Gladue R.P."/>
            <person name="Lin W."/>
            <person name="Boyd J.G."/>
            <person name="Moser B."/>
            <person name="Wood D.E."/>
            <person name="Sahagan B.G."/>
            <person name="Neote K."/>
        </authorList>
    </citation>
    <scope>NUCLEOTIDE SEQUENCE [MRNA]</scope>
    <source>
        <tissue>Fetal astrocyte</tissue>
    </source>
</reference>
<reference key="4">
    <citation type="journal article" date="1999" name="J. Invest. Dermatol.">
        <title>Human IP-9: a keratinocyte derived high affinity CXC-chemokine ligand for the IP-10/Mig receptor (CXCR3).</title>
        <authorList>
            <person name="Tensen C.P."/>
            <person name="Flier J."/>
            <person name="van der Raaij-Helmer E.M.H."/>
            <person name="Sampat-Sardjoepersad S."/>
            <person name="van der Schors R.C."/>
            <person name="Leurs R."/>
            <person name="Scheper R.J."/>
            <person name="Boorsma D.M."/>
            <person name="Willemze R."/>
        </authorList>
    </citation>
    <scope>NUCLEOTIDE SEQUENCE [MRNA]</scope>
    <scope>PROTEIN SEQUENCE OF 22-38</scope>
    <scope>MASS SPECTROMETRY</scope>
    <source>
        <tissue>Keratinocyte</tissue>
    </source>
</reference>
<reference key="5">
    <citation type="journal article" date="1999" name="J. Interferon Cytokine Res.">
        <title>Structure and expression of the human small cytokine B subfamily member 11 (SCYB11/formerly SCYB9B, alias I-TAC) gene cloned from IFN-gamma-treated human monocytes (THP-1).</title>
        <authorList>
            <person name="Laich A.M."/>
            <person name="Meyer M."/>
            <person name="Werner E.R."/>
            <person name="Werner-Felmayer G."/>
        </authorList>
    </citation>
    <scope>NUCLEOTIDE SEQUENCE [GENOMIC DNA / MRNA]</scope>
    <source>
        <tissue>Myeloma</tissue>
    </source>
</reference>
<reference key="6">
    <citation type="journal article" date="1999" name="Biochim. Biophys. Acta">
        <title>Genomic organization, sequence and transcriptional regulation of the human CXCL 11 gene.</title>
        <authorList>
            <person name="Tensen C.P."/>
            <person name="Flier J."/>
            <person name="Rampersad S."/>
            <person name="Sampat-Sardjoepersad S."/>
            <person name="Scheper R.J."/>
            <person name="Boorsma D.M."/>
            <person name="Willemze R."/>
        </authorList>
    </citation>
    <scope>NUCLEOTIDE SEQUENCE [GENOMIC DNA]</scope>
    <source>
        <tissue>Keratinocyte</tissue>
    </source>
</reference>
<reference key="7">
    <citation type="submission" date="2003-05" db="EMBL/GenBank/DDBJ databases">
        <title>Cloning of human full-length CDSs in BD Creator(TM) system donor vector.</title>
        <authorList>
            <person name="Kalnine N."/>
            <person name="Chen X."/>
            <person name="Rolfs A."/>
            <person name="Halleck A."/>
            <person name="Hines L."/>
            <person name="Eisenstein S."/>
            <person name="Koundinya M."/>
            <person name="Raphael J."/>
            <person name="Moreira D."/>
            <person name="Kelley T."/>
            <person name="LaBaer J."/>
            <person name="Lin Y."/>
            <person name="Phelan M."/>
            <person name="Farmer A."/>
        </authorList>
    </citation>
    <scope>NUCLEOTIDE SEQUENCE [LARGE SCALE MRNA]</scope>
</reference>
<reference key="8">
    <citation type="journal article" date="2004" name="Genome Res.">
        <title>The status, quality, and expansion of the NIH full-length cDNA project: the Mammalian Gene Collection (MGC).</title>
        <authorList>
            <consortium name="The MGC Project Team"/>
        </authorList>
    </citation>
    <scope>NUCLEOTIDE SEQUENCE [LARGE SCALE MRNA]</scope>
    <source>
        <tissue>Bone marrow</tissue>
        <tissue>Brain</tissue>
        <tissue>Liver</tissue>
    </source>
</reference>
<reference key="9">
    <citation type="journal article" date="1998" name="Cytogenet. Cell Genet.">
        <title>The human gene encoding SCYB9B, a putative novel CXC chemokine, maps to human chromosome 4q21 like the closely related genes for MIG (SCYB9) and INP10 (SCYB10).</title>
        <authorList>
            <person name="Erdel M."/>
            <person name="Laich A."/>
            <person name="Utermann G."/>
            <person name="Werner E.R."/>
            <person name="Werner-Felmayer G."/>
        </authorList>
    </citation>
    <scope>NUCLEOTIDE SEQUENCE [GENOMIC DNA / MRNA] OF 28-84</scope>
</reference>
<reference key="10">
    <citation type="journal article" date="2008" name="Blood">
        <title>Citrullination of CXCL10 and CXCL11 by peptidylarginine deiminase: a naturally occurring posttranslational modification of chemokines and new dimension of immunoregulation.</title>
        <authorList>
            <person name="Loos T."/>
            <person name="Mortier A."/>
            <person name="Gouwy M."/>
            <person name="Ronsse I."/>
            <person name="Put W."/>
            <person name="Lenaerts J.P."/>
            <person name="Van Damme J."/>
            <person name="Proost P."/>
        </authorList>
    </citation>
    <scope>CITRULLINATION AT ARG-27</scope>
</reference>
<reference key="11">
    <citation type="journal article" date="2016" name="J. Biol. Chem.">
        <title>The Anti-inflammatory Protein TSG-6 Regulates Chemokine Function by Inhibiting Chemokine/Glycosaminoglycan Interactions.</title>
        <authorList>
            <person name="Dyer D.P."/>
            <person name="Salanga C.L."/>
            <person name="Johns S.C."/>
            <person name="Valdambrini E."/>
            <person name="Fuster M.M."/>
            <person name="Milner C.M."/>
            <person name="Day A.J."/>
            <person name="Handel T.M."/>
        </authorList>
    </citation>
    <scope>INTERACTION WITH TNFAIP6</scope>
</reference>
<reference key="12">
    <citation type="journal article" date="2004" name="Protein Sci.">
        <title>NMR structure of CXCR3 binding chemokine CXCL11 (ITAC).</title>
        <authorList>
            <person name="Booth V."/>
            <person name="Clark-Lewis I."/>
            <person name="Sykes B.D."/>
        </authorList>
    </citation>
    <scope>STRUCTURE BY NMR OF 22-94</scope>
    <scope>DISULFIDE BONDS</scope>
</reference>
<name>CXL11_HUMAN</name>
<evidence type="ECO:0000269" key="1">
    <source>
    </source>
</evidence>
<evidence type="ECO:0000269" key="2">
    <source>
    </source>
</evidence>
<evidence type="ECO:0000269" key="3">
    <source>
    </source>
</evidence>
<evidence type="ECO:0000269" key="4">
    <source>
    </source>
</evidence>
<evidence type="ECO:0000305" key="5"/>
<evidence type="ECO:0007829" key="6">
    <source>
        <dbReference type="PDB" id="8HNK"/>
    </source>
</evidence>
<keyword id="KW-0002">3D-structure</keyword>
<keyword id="KW-0145">Chemotaxis</keyword>
<keyword id="KW-0164">Citrullination</keyword>
<keyword id="KW-0202">Cytokine</keyword>
<keyword id="KW-0903">Direct protein sequencing</keyword>
<keyword id="KW-1015">Disulfide bond</keyword>
<keyword id="KW-0395">Inflammatory response</keyword>
<keyword id="KW-1267">Proteomics identification</keyword>
<keyword id="KW-1185">Reference proteome</keyword>
<keyword id="KW-0964">Secreted</keyword>
<keyword id="KW-0732">Signal</keyword>
<proteinExistence type="evidence at protein level"/>
<dbReference type="EMBL" id="U59286">
    <property type="protein sequence ID" value="AAB17374.1"/>
    <property type="status" value="ALT_INIT"/>
    <property type="molecule type" value="mRNA"/>
</dbReference>
<dbReference type="EMBL" id="AF002985">
    <property type="protein sequence ID" value="AAC51845.1"/>
    <property type="molecule type" value="mRNA"/>
</dbReference>
<dbReference type="EMBL" id="AF030514">
    <property type="protein sequence ID" value="AAC39775.1"/>
    <property type="molecule type" value="mRNA"/>
</dbReference>
<dbReference type="EMBL" id="Y15220">
    <property type="protein sequence ID" value="CAA75510.1"/>
    <property type="molecule type" value="mRNA"/>
</dbReference>
<dbReference type="EMBL" id="U66096">
    <property type="protein sequence ID" value="AAD38867.1"/>
    <property type="molecule type" value="mRNA"/>
</dbReference>
<dbReference type="EMBL" id="AF077867">
    <property type="protein sequence ID" value="AAD38327.1"/>
    <property type="molecule type" value="Genomic_DNA"/>
</dbReference>
<dbReference type="EMBL" id="Y15221">
    <property type="protein sequence ID" value="CAB51859.1"/>
    <property type="molecule type" value="Genomic_DNA"/>
</dbReference>
<dbReference type="EMBL" id="BT006787">
    <property type="protein sequence ID" value="AAP35433.1"/>
    <property type="molecule type" value="mRNA"/>
</dbReference>
<dbReference type="EMBL" id="BC005292">
    <property type="protein sequence ID" value="AAH05292.1"/>
    <property type="molecule type" value="mRNA"/>
</dbReference>
<dbReference type="EMBL" id="BC012532">
    <property type="protein sequence ID" value="AAH12532.1"/>
    <property type="molecule type" value="mRNA"/>
</dbReference>
<dbReference type="EMBL" id="BC110986">
    <property type="protein sequence ID" value="AAI10987.1"/>
    <property type="molecule type" value="mRNA"/>
</dbReference>
<dbReference type="EMBL" id="AF053972">
    <property type="protein sequence ID" value="AAD10206.1"/>
    <property type="molecule type" value="Genomic_DNA"/>
</dbReference>
<dbReference type="CCDS" id="CCDS3574.1"/>
<dbReference type="RefSeq" id="NP_001289052.1">
    <property type="nucleotide sequence ID" value="NM_001302123.1"/>
</dbReference>
<dbReference type="RefSeq" id="NP_005400.1">
    <property type="nucleotide sequence ID" value="NM_005409.5"/>
</dbReference>
<dbReference type="PDB" id="1RJT">
    <property type="method" value="NMR"/>
    <property type="chains" value="A=22-94"/>
</dbReference>
<dbReference type="PDB" id="8HNK">
    <property type="method" value="EM"/>
    <property type="resolution" value="3.01 A"/>
    <property type="chains" value="L=1-94"/>
</dbReference>
<dbReference type="PDBsum" id="1RJT"/>
<dbReference type="PDBsum" id="8HNK"/>
<dbReference type="EMDB" id="EMD-34914"/>
<dbReference type="SMR" id="O14625"/>
<dbReference type="BioGRID" id="112275">
    <property type="interactions" value="23"/>
</dbReference>
<dbReference type="DIP" id="DIP-5890N"/>
<dbReference type="FunCoup" id="O14625">
    <property type="interactions" value="829"/>
</dbReference>
<dbReference type="IntAct" id="O14625">
    <property type="interactions" value="26"/>
</dbReference>
<dbReference type="MINT" id="O14625"/>
<dbReference type="STRING" id="9606.ENSP00000306884"/>
<dbReference type="GlyGen" id="O14625">
    <property type="glycosylation" value="1 site"/>
</dbReference>
<dbReference type="iPTMnet" id="O14625"/>
<dbReference type="PhosphoSitePlus" id="O14625"/>
<dbReference type="BioMuta" id="CXCL11"/>
<dbReference type="jPOST" id="O14625"/>
<dbReference type="MassIVE" id="O14625"/>
<dbReference type="PaxDb" id="9606-ENSP00000306884"/>
<dbReference type="PeptideAtlas" id="O14625"/>
<dbReference type="ProteomicsDB" id="48123"/>
<dbReference type="ABCD" id="O14625">
    <property type="antibodies" value="31 sequenced antibodies"/>
</dbReference>
<dbReference type="Antibodypedia" id="4090">
    <property type="antibodies" value="568 antibodies from 33 providers"/>
</dbReference>
<dbReference type="DNASU" id="6373"/>
<dbReference type="Ensembl" id="ENST00000306621.8">
    <property type="protein sequence ID" value="ENSP00000306884.3"/>
    <property type="gene ID" value="ENSG00000169248.13"/>
</dbReference>
<dbReference type="Ensembl" id="ENST00000503860.1">
    <property type="protein sequence ID" value="ENSP00000425819.1"/>
    <property type="gene ID" value="ENSG00000169248.13"/>
</dbReference>
<dbReference type="GeneID" id="6373"/>
<dbReference type="KEGG" id="hsa:6373"/>
<dbReference type="MANE-Select" id="ENST00000306621.8">
    <property type="protein sequence ID" value="ENSP00000306884.3"/>
    <property type="RefSeq nucleotide sequence ID" value="NM_005409.5"/>
    <property type="RefSeq protein sequence ID" value="NP_005400.1"/>
</dbReference>
<dbReference type="UCSC" id="uc003hjm.4">
    <property type="organism name" value="human"/>
</dbReference>
<dbReference type="AGR" id="HGNC:10638"/>
<dbReference type="CTD" id="6373"/>
<dbReference type="DisGeNET" id="6373"/>
<dbReference type="GeneCards" id="CXCL11"/>
<dbReference type="HGNC" id="HGNC:10638">
    <property type="gene designation" value="CXCL11"/>
</dbReference>
<dbReference type="HPA" id="ENSG00000169248">
    <property type="expression patterns" value="Tissue enhanced (lymphoid)"/>
</dbReference>
<dbReference type="MIM" id="604852">
    <property type="type" value="gene"/>
</dbReference>
<dbReference type="neXtProt" id="NX_O14625"/>
<dbReference type="OpenTargets" id="ENSG00000169248"/>
<dbReference type="PharmGKB" id="PA35569"/>
<dbReference type="VEuPathDB" id="HostDB:ENSG00000169248"/>
<dbReference type="eggNOG" id="ENOG502SGFE">
    <property type="taxonomic scope" value="Eukaryota"/>
</dbReference>
<dbReference type="GeneTree" id="ENSGT00530000064263"/>
<dbReference type="HOGENOM" id="CLU_143902_2_3_1"/>
<dbReference type="InParanoid" id="O14625"/>
<dbReference type="OMA" id="ANKGQRC"/>
<dbReference type="OrthoDB" id="8872899at2759"/>
<dbReference type="PAN-GO" id="O14625">
    <property type="GO annotations" value="8 GO annotations based on evolutionary models"/>
</dbReference>
<dbReference type="PhylomeDB" id="O14625"/>
<dbReference type="TreeFam" id="TF333433"/>
<dbReference type="PathwayCommons" id="O14625"/>
<dbReference type="Reactome" id="R-HSA-380108">
    <property type="pathway name" value="Chemokine receptors bind chemokines"/>
</dbReference>
<dbReference type="Reactome" id="R-HSA-418594">
    <property type="pathway name" value="G alpha (i) signalling events"/>
</dbReference>
<dbReference type="SignaLink" id="O14625"/>
<dbReference type="SIGNOR" id="O14625"/>
<dbReference type="BioGRID-ORCS" id="6373">
    <property type="hits" value="31 hits in 1153 CRISPR screens"/>
</dbReference>
<dbReference type="EvolutionaryTrace" id="O14625"/>
<dbReference type="GeneWiki" id="CXCL11"/>
<dbReference type="GenomeRNAi" id="6373"/>
<dbReference type="Pharos" id="O14625">
    <property type="development level" value="Tbio"/>
</dbReference>
<dbReference type="PRO" id="PR:O14625"/>
<dbReference type="Proteomes" id="UP000005640">
    <property type="component" value="Chromosome 4"/>
</dbReference>
<dbReference type="RNAct" id="O14625">
    <property type="molecule type" value="protein"/>
</dbReference>
<dbReference type="Bgee" id="ENSG00000169248">
    <property type="expression patterns" value="Expressed in male germ line stem cell (sensu Vertebrata) in testis and 117 other cell types or tissues"/>
</dbReference>
<dbReference type="GO" id="GO:0005576">
    <property type="term" value="C:extracellular region"/>
    <property type="evidence" value="ECO:0000304"/>
    <property type="project" value="Reactome"/>
</dbReference>
<dbReference type="GO" id="GO:0005615">
    <property type="term" value="C:extracellular space"/>
    <property type="evidence" value="ECO:0007669"/>
    <property type="project" value="UniProtKB-KW"/>
</dbReference>
<dbReference type="GO" id="GO:0008009">
    <property type="term" value="F:chemokine activity"/>
    <property type="evidence" value="ECO:0000314"/>
    <property type="project" value="UniProtKB"/>
</dbReference>
<dbReference type="GO" id="GO:0048248">
    <property type="term" value="F:CXCR3 chemokine receptor binding"/>
    <property type="evidence" value="ECO:0000314"/>
    <property type="project" value="UniProtKB"/>
</dbReference>
<dbReference type="GO" id="GO:0008201">
    <property type="term" value="F:heparin binding"/>
    <property type="evidence" value="ECO:0000315"/>
    <property type="project" value="UniProtKB"/>
</dbReference>
<dbReference type="GO" id="GO:0007189">
    <property type="term" value="P:adenylate cyclase-activating G protein-coupled receptor signaling pathway"/>
    <property type="evidence" value="ECO:0000314"/>
    <property type="project" value="UniProtKB"/>
</dbReference>
<dbReference type="GO" id="GO:0007267">
    <property type="term" value="P:cell-cell signaling"/>
    <property type="evidence" value="ECO:0000304"/>
    <property type="project" value="ProtInc"/>
</dbReference>
<dbReference type="GO" id="GO:0070098">
    <property type="term" value="P:chemokine-mediated signaling pathway"/>
    <property type="evidence" value="ECO:0000315"/>
    <property type="project" value="UniProtKB"/>
</dbReference>
<dbReference type="GO" id="GO:0006935">
    <property type="term" value="P:chemotaxis"/>
    <property type="evidence" value="ECO:0000314"/>
    <property type="project" value="UniProtKB"/>
</dbReference>
<dbReference type="GO" id="GO:0006955">
    <property type="term" value="P:immune response"/>
    <property type="evidence" value="ECO:0007669"/>
    <property type="project" value="Ensembl"/>
</dbReference>
<dbReference type="GO" id="GO:0006954">
    <property type="term" value="P:inflammatory response"/>
    <property type="evidence" value="ECO:0000304"/>
    <property type="project" value="ProtInc"/>
</dbReference>
<dbReference type="GO" id="GO:0051281">
    <property type="term" value="P:positive regulation of release of sequestered calcium ion into cytosol"/>
    <property type="evidence" value="ECO:0000314"/>
    <property type="project" value="UniProtKB"/>
</dbReference>
<dbReference type="GO" id="GO:0042127">
    <property type="term" value="P:regulation of cell population proliferation"/>
    <property type="evidence" value="ECO:0000315"/>
    <property type="project" value="UniProtKB"/>
</dbReference>
<dbReference type="GO" id="GO:0007165">
    <property type="term" value="P:signal transduction"/>
    <property type="evidence" value="ECO:0000304"/>
    <property type="project" value="ProtInc"/>
</dbReference>
<dbReference type="GO" id="GO:0010818">
    <property type="term" value="P:T cell chemotaxis"/>
    <property type="evidence" value="ECO:0000315"/>
    <property type="project" value="UniProtKB"/>
</dbReference>
<dbReference type="CDD" id="cd00273">
    <property type="entry name" value="Chemokine_CXC"/>
    <property type="match status" value="1"/>
</dbReference>
<dbReference type="FunFam" id="2.40.50.40:FF:000004">
    <property type="entry name" value="C-X-C motif chemokine"/>
    <property type="match status" value="1"/>
</dbReference>
<dbReference type="Gene3D" id="2.40.50.40">
    <property type="match status" value="1"/>
</dbReference>
<dbReference type="InterPro" id="IPR039809">
    <property type="entry name" value="Chemokine_b/g/d"/>
</dbReference>
<dbReference type="InterPro" id="IPR001089">
    <property type="entry name" value="Chemokine_CXC"/>
</dbReference>
<dbReference type="InterPro" id="IPR018048">
    <property type="entry name" value="Chemokine_CXC_CS"/>
</dbReference>
<dbReference type="InterPro" id="IPR001811">
    <property type="entry name" value="Chemokine_IL8-like_dom"/>
</dbReference>
<dbReference type="InterPro" id="IPR033899">
    <property type="entry name" value="CXC_Chemokine_domain"/>
</dbReference>
<dbReference type="InterPro" id="IPR036048">
    <property type="entry name" value="Interleukin_8-like_sf"/>
</dbReference>
<dbReference type="PANTHER" id="PTHR12015:SF191">
    <property type="entry name" value="C-X-C MOTIF CHEMOKINE 11"/>
    <property type="match status" value="1"/>
</dbReference>
<dbReference type="PANTHER" id="PTHR12015">
    <property type="entry name" value="SMALL INDUCIBLE CYTOKINE A"/>
    <property type="match status" value="1"/>
</dbReference>
<dbReference type="Pfam" id="PF00048">
    <property type="entry name" value="IL8"/>
    <property type="match status" value="1"/>
</dbReference>
<dbReference type="PRINTS" id="PR00437">
    <property type="entry name" value="SMALLCYTKCXC"/>
</dbReference>
<dbReference type="SMART" id="SM00199">
    <property type="entry name" value="SCY"/>
    <property type="match status" value="1"/>
</dbReference>
<dbReference type="SUPFAM" id="SSF54117">
    <property type="entry name" value="Interleukin 8-like chemokines"/>
    <property type="match status" value="1"/>
</dbReference>
<dbReference type="PROSITE" id="PS00471">
    <property type="entry name" value="SMALL_CYTOKINES_CXC"/>
    <property type="match status" value="1"/>
</dbReference>
<sequence>MSVKGMAIALAVILCATVVQGFPMFKRGRCLCIGPGVKAVKVADIEKASIMYPSNNCDKIEVIITLKENKGQRCLNPKSKQARLIIKKVERKNF</sequence>
<protein>
    <recommendedName>
        <fullName>C-X-C motif chemokine 11</fullName>
    </recommendedName>
    <alternativeName>
        <fullName>Beta-R1</fullName>
    </alternativeName>
    <alternativeName>
        <fullName>H174</fullName>
    </alternativeName>
    <alternativeName>
        <fullName>Interferon gamma-inducible protein 9</fullName>
        <shortName>IP-9</shortName>
    </alternativeName>
    <alternativeName>
        <fullName>Interferon-inducible T-cell alpha chemoattractant</fullName>
        <shortName>I-TAC</shortName>
    </alternativeName>
    <alternativeName>
        <fullName>Small-inducible cytokine B11</fullName>
    </alternativeName>
</protein>
<accession>O14625</accession>
<accession>Q53YA3</accession>
<accession>Q92840</accession>
<gene>
    <name type="primary">CXCL11</name>
    <name type="synonym">ITAC</name>
    <name type="synonym">SCYB11</name>
    <name type="synonym">SCYB9B</name>
</gene>